<evidence type="ECO:0000255" key="1">
    <source>
        <dbReference type="HAMAP-Rule" id="MF_01183"/>
    </source>
</evidence>
<gene>
    <name evidence="1" type="primary">surA</name>
    <name type="ordered locus">CPS_4524</name>
</gene>
<reference key="1">
    <citation type="journal article" date="2005" name="Proc. Natl. Acad. Sci. U.S.A.">
        <title>The psychrophilic lifestyle as revealed by the genome sequence of Colwellia psychrerythraea 34H through genomic and proteomic analyses.</title>
        <authorList>
            <person name="Methe B.A."/>
            <person name="Nelson K.E."/>
            <person name="Deming J.W."/>
            <person name="Momen B."/>
            <person name="Melamud E."/>
            <person name="Zhang X."/>
            <person name="Moult J."/>
            <person name="Madupu R."/>
            <person name="Nelson W.C."/>
            <person name="Dodson R.J."/>
            <person name="Brinkac L.M."/>
            <person name="Daugherty S.C."/>
            <person name="Durkin A.S."/>
            <person name="DeBoy R.T."/>
            <person name="Kolonay J.F."/>
            <person name="Sullivan S.A."/>
            <person name="Zhou L."/>
            <person name="Davidsen T.M."/>
            <person name="Wu M."/>
            <person name="Huston A.L."/>
            <person name="Lewis M."/>
            <person name="Weaver B."/>
            <person name="Weidman J.F."/>
            <person name="Khouri H."/>
            <person name="Utterback T.R."/>
            <person name="Feldblyum T.V."/>
            <person name="Fraser C.M."/>
        </authorList>
    </citation>
    <scope>NUCLEOTIDE SEQUENCE [LARGE SCALE GENOMIC DNA]</scope>
    <source>
        <strain>34H / ATCC BAA-681</strain>
    </source>
</reference>
<organism>
    <name type="scientific">Colwellia psychrerythraea (strain 34H / ATCC BAA-681)</name>
    <name type="common">Vibrio psychroerythus</name>
    <dbReference type="NCBI Taxonomy" id="167879"/>
    <lineage>
        <taxon>Bacteria</taxon>
        <taxon>Pseudomonadati</taxon>
        <taxon>Pseudomonadota</taxon>
        <taxon>Gammaproteobacteria</taxon>
        <taxon>Alteromonadales</taxon>
        <taxon>Colwelliaceae</taxon>
        <taxon>Colwellia</taxon>
    </lineage>
</organism>
<name>SURA_COLP3</name>
<sequence length="433" mass="48639">MKYRIKALLLASSLIITTITSVQAKEELLDRVAAIVNTGVVLESEVNDLLVNIKQQAKKNNQSLPSDKALRIQVMDKLINDSLLSQMGQRMGIQISDAQLDQTLNNMAREDKLTLAQFRQQVIDEGTSYEKYRENVRIELVSGEVSRNSVRRRIFVSPQEVDNLLKVMKEQSSNNVEYHLGHILIEFPADASQEDLAAAKTRATKVVELLNDGSDFAKIAITSSGDANALKGGDLGWKNINEMPTLFSELINDKPKDTIVGPIRTGLGYSIVKVLDIRGRKVVEVEEVKASHILIKPSIILSDEKAKSLLQGFLNQIDAGEATFEELAKEHSEGPTSVRGGDLGWADPKNYDPAFTEALATMKKGGYHKPFRSSFGWHIIKLEDRRMVDATSQLNENRAYQILFNRKYGMESTRWLKETRDEAYIEIFEQDNK</sequence>
<protein>
    <recommendedName>
        <fullName evidence="1">Chaperone SurA</fullName>
    </recommendedName>
    <alternativeName>
        <fullName evidence="1">Peptidyl-prolyl cis-trans isomerase SurA</fullName>
        <shortName evidence="1">PPIase SurA</shortName>
        <ecNumber evidence="1">5.2.1.8</ecNumber>
    </alternativeName>
    <alternativeName>
        <fullName evidence="1">Rotamase SurA</fullName>
    </alternativeName>
</protein>
<proteinExistence type="inferred from homology"/>
<feature type="signal peptide" evidence="1">
    <location>
        <begin position="1"/>
        <end position="24"/>
    </location>
</feature>
<feature type="chain" id="PRO_0000270012" description="Chaperone SurA">
    <location>
        <begin position="25"/>
        <end position="433"/>
    </location>
</feature>
<feature type="domain" description="PpiC 1" evidence="1">
    <location>
        <begin position="175"/>
        <end position="276"/>
    </location>
</feature>
<feature type="domain" description="PpiC 2" evidence="1">
    <location>
        <begin position="285"/>
        <end position="384"/>
    </location>
</feature>
<keyword id="KW-0143">Chaperone</keyword>
<keyword id="KW-0413">Isomerase</keyword>
<keyword id="KW-0574">Periplasm</keyword>
<keyword id="KW-0677">Repeat</keyword>
<keyword id="KW-0697">Rotamase</keyword>
<keyword id="KW-0732">Signal</keyword>
<dbReference type="EC" id="5.2.1.8" evidence="1"/>
<dbReference type="EMBL" id="CP000083">
    <property type="protein sequence ID" value="AAZ28113.1"/>
    <property type="molecule type" value="Genomic_DNA"/>
</dbReference>
<dbReference type="SMR" id="Q47VK0"/>
<dbReference type="STRING" id="167879.CPS_4524"/>
<dbReference type="KEGG" id="cps:CPS_4524"/>
<dbReference type="eggNOG" id="COG0760">
    <property type="taxonomic scope" value="Bacteria"/>
</dbReference>
<dbReference type="HOGENOM" id="CLU_034646_11_0_6"/>
<dbReference type="Proteomes" id="UP000000547">
    <property type="component" value="Chromosome"/>
</dbReference>
<dbReference type="GO" id="GO:0030288">
    <property type="term" value="C:outer membrane-bounded periplasmic space"/>
    <property type="evidence" value="ECO:0007669"/>
    <property type="project" value="InterPro"/>
</dbReference>
<dbReference type="GO" id="GO:0042277">
    <property type="term" value="F:peptide binding"/>
    <property type="evidence" value="ECO:0007669"/>
    <property type="project" value="InterPro"/>
</dbReference>
<dbReference type="GO" id="GO:0003755">
    <property type="term" value="F:peptidyl-prolyl cis-trans isomerase activity"/>
    <property type="evidence" value="ECO:0007669"/>
    <property type="project" value="UniProtKB-UniRule"/>
</dbReference>
<dbReference type="GO" id="GO:0051082">
    <property type="term" value="F:unfolded protein binding"/>
    <property type="evidence" value="ECO:0007669"/>
    <property type="project" value="UniProtKB-UniRule"/>
</dbReference>
<dbReference type="GO" id="GO:0043165">
    <property type="term" value="P:Gram-negative-bacterium-type cell outer membrane assembly"/>
    <property type="evidence" value="ECO:0007669"/>
    <property type="project" value="InterPro"/>
</dbReference>
<dbReference type="GO" id="GO:0006457">
    <property type="term" value="P:protein folding"/>
    <property type="evidence" value="ECO:0007669"/>
    <property type="project" value="UniProtKB-UniRule"/>
</dbReference>
<dbReference type="GO" id="GO:0050821">
    <property type="term" value="P:protein stabilization"/>
    <property type="evidence" value="ECO:0007669"/>
    <property type="project" value="InterPro"/>
</dbReference>
<dbReference type="Gene3D" id="3.10.50.40">
    <property type="match status" value="2"/>
</dbReference>
<dbReference type="Gene3D" id="1.10.4030.10">
    <property type="entry name" value="Porin chaperone SurA, peptide-binding domain"/>
    <property type="match status" value="1"/>
</dbReference>
<dbReference type="HAMAP" id="MF_01183">
    <property type="entry name" value="Chaperone_SurA"/>
    <property type="match status" value="1"/>
</dbReference>
<dbReference type="InterPro" id="IPR050280">
    <property type="entry name" value="OMP_Chaperone_SurA"/>
</dbReference>
<dbReference type="InterPro" id="IPR046357">
    <property type="entry name" value="PPIase_dom_sf"/>
</dbReference>
<dbReference type="InterPro" id="IPR000297">
    <property type="entry name" value="PPIase_PpiC"/>
</dbReference>
<dbReference type="InterPro" id="IPR023058">
    <property type="entry name" value="PPIase_PpiC_CS"/>
</dbReference>
<dbReference type="InterPro" id="IPR023034">
    <property type="entry name" value="PPIase_SurA"/>
</dbReference>
<dbReference type="InterPro" id="IPR015391">
    <property type="entry name" value="SurA_N"/>
</dbReference>
<dbReference type="InterPro" id="IPR027304">
    <property type="entry name" value="Trigger_fact/SurA_dom_sf"/>
</dbReference>
<dbReference type="NCBIfam" id="NF008038">
    <property type="entry name" value="PRK10770.1"/>
    <property type="match status" value="1"/>
</dbReference>
<dbReference type="PANTHER" id="PTHR47637">
    <property type="entry name" value="CHAPERONE SURA"/>
    <property type="match status" value="1"/>
</dbReference>
<dbReference type="PANTHER" id="PTHR47637:SF1">
    <property type="entry name" value="CHAPERONE SURA"/>
    <property type="match status" value="1"/>
</dbReference>
<dbReference type="Pfam" id="PF00639">
    <property type="entry name" value="Rotamase"/>
    <property type="match status" value="1"/>
</dbReference>
<dbReference type="Pfam" id="PF13616">
    <property type="entry name" value="Rotamase_3"/>
    <property type="match status" value="1"/>
</dbReference>
<dbReference type="Pfam" id="PF09312">
    <property type="entry name" value="SurA_N"/>
    <property type="match status" value="1"/>
</dbReference>
<dbReference type="SUPFAM" id="SSF54534">
    <property type="entry name" value="FKBP-like"/>
    <property type="match status" value="2"/>
</dbReference>
<dbReference type="SUPFAM" id="SSF109998">
    <property type="entry name" value="Triger factor/SurA peptide-binding domain-like"/>
    <property type="match status" value="1"/>
</dbReference>
<dbReference type="PROSITE" id="PS01096">
    <property type="entry name" value="PPIC_PPIASE_1"/>
    <property type="match status" value="1"/>
</dbReference>
<dbReference type="PROSITE" id="PS50198">
    <property type="entry name" value="PPIC_PPIASE_2"/>
    <property type="match status" value="2"/>
</dbReference>
<accession>Q47VK0</accession>
<comment type="function">
    <text evidence="1">Chaperone involved in the correct folding and assembly of outer membrane proteins. Recognizes specific patterns of aromatic residues and the orientation of their side chains, which are found more frequently in integral outer membrane proteins. May act in both early periplasmic and late outer membrane-associated steps of protein maturation.</text>
</comment>
<comment type="catalytic activity">
    <reaction evidence="1">
        <text>[protein]-peptidylproline (omega=180) = [protein]-peptidylproline (omega=0)</text>
        <dbReference type="Rhea" id="RHEA:16237"/>
        <dbReference type="Rhea" id="RHEA-COMP:10747"/>
        <dbReference type="Rhea" id="RHEA-COMP:10748"/>
        <dbReference type="ChEBI" id="CHEBI:83833"/>
        <dbReference type="ChEBI" id="CHEBI:83834"/>
        <dbReference type="EC" id="5.2.1.8"/>
    </reaction>
</comment>
<comment type="subcellular location">
    <subcellularLocation>
        <location evidence="1">Periplasm</location>
    </subcellularLocation>
    <text evidence="1">Is capable of associating with the outer membrane.</text>
</comment>
<comment type="domain">
    <text evidence="1">The PPIase activity resides only in the second parvulin domain. The N-terminal region and the C-terminal tail are necessary and sufficient for the chaperone activity of SurA. The PPIase activity is dispensable for SurA to function as a chaperone. The N-terminal region and the C-terminal tail are also required for porin recognition.</text>
</comment>